<comment type="function">
    <text evidence="1">An essential GTPase that binds both GDP and GTP, with rapid nucleotide exchange. Plays a role in 16S rRNA processing and 30S ribosomal subunit biogenesis and possibly also in cell cycle regulation and energy metabolism.</text>
</comment>
<comment type="subunit">
    <text evidence="1">Monomer.</text>
</comment>
<comment type="subcellular location">
    <subcellularLocation>
        <location>Cytoplasm</location>
    </subcellularLocation>
    <subcellularLocation>
        <location evidence="1">Cell membrane</location>
        <topology evidence="1">Peripheral membrane protein</topology>
    </subcellularLocation>
</comment>
<comment type="similarity">
    <text evidence="1 2">Belongs to the TRAFAC class TrmE-Era-EngA-EngB-Septin-like GTPase superfamily. Era GTPase family.</text>
</comment>
<feature type="chain" id="PRO_1000133764" description="GTPase Era">
    <location>
        <begin position="1"/>
        <end position="303"/>
    </location>
</feature>
<feature type="domain" description="Era-type G" evidence="2">
    <location>
        <begin position="9"/>
        <end position="176"/>
    </location>
</feature>
<feature type="domain" description="KH type-2" evidence="1">
    <location>
        <begin position="199"/>
        <end position="284"/>
    </location>
</feature>
<feature type="region of interest" description="G1" evidence="2">
    <location>
        <begin position="17"/>
        <end position="24"/>
    </location>
</feature>
<feature type="region of interest" description="G2" evidence="2">
    <location>
        <begin position="43"/>
        <end position="47"/>
    </location>
</feature>
<feature type="region of interest" description="G3" evidence="2">
    <location>
        <begin position="64"/>
        <end position="67"/>
    </location>
</feature>
<feature type="region of interest" description="G4" evidence="2">
    <location>
        <begin position="126"/>
        <end position="129"/>
    </location>
</feature>
<feature type="region of interest" description="G5" evidence="2">
    <location>
        <begin position="155"/>
        <end position="157"/>
    </location>
</feature>
<feature type="binding site" evidence="1">
    <location>
        <begin position="17"/>
        <end position="24"/>
    </location>
    <ligand>
        <name>GTP</name>
        <dbReference type="ChEBI" id="CHEBI:37565"/>
    </ligand>
</feature>
<feature type="binding site" evidence="1">
    <location>
        <begin position="64"/>
        <end position="68"/>
    </location>
    <ligand>
        <name>GTP</name>
        <dbReference type="ChEBI" id="CHEBI:37565"/>
    </ligand>
</feature>
<feature type="binding site" evidence="1">
    <location>
        <begin position="126"/>
        <end position="129"/>
    </location>
    <ligand>
        <name>GTP</name>
        <dbReference type="ChEBI" id="CHEBI:37565"/>
    </ligand>
</feature>
<name>ERA_SHOC1</name>
<gene>
    <name evidence="1" type="primary">era</name>
    <name type="ordered locus">ABC1681</name>
</gene>
<sequence>MKQKTTTFKSGFVSIIGRPNVGKSTLLNRVIGQKIAIMSDKPQTTRNKVQGVLTRDDAQLVFMDTPGIHKPKHRLGDFMMKVAKNTLREVDLILYVVEADAKFGPGEQYIIERLQETKTPVFLLINKIDKVSPEELLKVIDLYKDRYPFAEIIPISALEGNNVPTLVEQIVEHMEEGPQYYPADQVTDHPERFIIAELIREKVLHLTKEEIPHSVAVVIEQIKKRDNGKVYVGATVIVERSSQKGIIIGKHGAMLKEVGQLARSDIEALLGSSVYLELWVKVQKDWRNRPSQLKDYGFNENEY</sequence>
<dbReference type="EMBL" id="AP006627">
    <property type="protein sequence ID" value="BAD64216.1"/>
    <property type="molecule type" value="Genomic_DNA"/>
</dbReference>
<dbReference type="RefSeq" id="WP_011246525.1">
    <property type="nucleotide sequence ID" value="NC_006582.1"/>
</dbReference>
<dbReference type="SMR" id="Q5WHD9"/>
<dbReference type="STRING" id="66692.ABC1681"/>
<dbReference type="KEGG" id="bcl:ABC1681"/>
<dbReference type="eggNOG" id="COG1159">
    <property type="taxonomic scope" value="Bacteria"/>
</dbReference>
<dbReference type="HOGENOM" id="CLU_038009_1_0_9"/>
<dbReference type="OrthoDB" id="9805918at2"/>
<dbReference type="Proteomes" id="UP000001168">
    <property type="component" value="Chromosome"/>
</dbReference>
<dbReference type="GO" id="GO:0005829">
    <property type="term" value="C:cytosol"/>
    <property type="evidence" value="ECO:0007669"/>
    <property type="project" value="TreeGrafter"/>
</dbReference>
<dbReference type="GO" id="GO:0005886">
    <property type="term" value="C:plasma membrane"/>
    <property type="evidence" value="ECO:0007669"/>
    <property type="project" value="UniProtKB-SubCell"/>
</dbReference>
<dbReference type="GO" id="GO:0005525">
    <property type="term" value="F:GTP binding"/>
    <property type="evidence" value="ECO:0007669"/>
    <property type="project" value="UniProtKB-UniRule"/>
</dbReference>
<dbReference type="GO" id="GO:0003924">
    <property type="term" value="F:GTPase activity"/>
    <property type="evidence" value="ECO:0007669"/>
    <property type="project" value="UniProtKB-UniRule"/>
</dbReference>
<dbReference type="GO" id="GO:0043024">
    <property type="term" value="F:ribosomal small subunit binding"/>
    <property type="evidence" value="ECO:0007669"/>
    <property type="project" value="TreeGrafter"/>
</dbReference>
<dbReference type="GO" id="GO:0070181">
    <property type="term" value="F:small ribosomal subunit rRNA binding"/>
    <property type="evidence" value="ECO:0007669"/>
    <property type="project" value="UniProtKB-UniRule"/>
</dbReference>
<dbReference type="GO" id="GO:0000028">
    <property type="term" value="P:ribosomal small subunit assembly"/>
    <property type="evidence" value="ECO:0007669"/>
    <property type="project" value="TreeGrafter"/>
</dbReference>
<dbReference type="CDD" id="cd04163">
    <property type="entry name" value="Era"/>
    <property type="match status" value="1"/>
</dbReference>
<dbReference type="CDD" id="cd22534">
    <property type="entry name" value="KH-II_Era"/>
    <property type="match status" value="1"/>
</dbReference>
<dbReference type="FunFam" id="3.30.300.20:FF:000003">
    <property type="entry name" value="GTPase Era"/>
    <property type="match status" value="1"/>
</dbReference>
<dbReference type="FunFam" id="3.40.50.300:FF:000094">
    <property type="entry name" value="GTPase Era"/>
    <property type="match status" value="1"/>
</dbReference>
<dbReference type="Gene3D" id="3.30.300.20">
    <property type="match status" value="1"/>
</dbReference>
<dbReference type="Gene3D" id="3.40.50.300">
    <property type="entry name" value="P-loop containing nucleotide triphosphate hydrolases"/>
    <property type="match status" value="1"/>
</dbReference>
<dbReference type="HAMAP" id="MF_00367">
    <property type="entry name" value="GTPase_Era"/>
    <property type="match status" value="1"/>
</dbReference>
<dbReference type="InterPro" id="IPR030388">
    <property type="entry name" value="G_ERA_dom"/>
</dbReference>
<dbReference type="InterPro" id="IPR006073">
    <property type="entry name" value="GTP-bd"/>
</dbReference>
<dbReference type="InterPro" id="IPR005662">
    <property type="entry name" value="GTPase_Era-like"/>
</dbReference>
<dbReference type="InterPro" id="IPR015946">
    <property type="entry name" value="KH_dom-like_a/b"/>
</dbReference>
<dbReference type="InterPro" id="IPR004044">
    <property type="entry name" value="KH_dom_type_2"/>
</dbReference>
<dbReference type="InterPro" id="IPR009019">
    <property type="entry name" value="KH_sf_prok-type"/>
</dbReference>
<dbReference type="InterPro" id="IPR027417">
    <property type="entry name" value="P-loop_NTPase"/>
</dbReference>
<dbReference type="InterPro" id="IPR005225">
    <property type="entry name" value="Small_GTP-bd"/>
</dbReference>
<dbReference type="NCBIfam" id="TIGR00436">
    <property type="entry name" value="era"/>
    <property type="match status" value="1"/>
</dbReference>
<dbReference type="NCBIfam" id="NF000908">
    <property type="entry name" value="PRK00089.1"/>
    <property type="match status" value="1"/>
</dbReference>
<dbReference type="NCBIfam" id="TIGR00231">
    <property type="entry name" value="small_GTP"/>
    <property type="match status" value="1"/>
</dbReference>
<dbReference type="PANTHER" id="PTHR42698">
    <property type="entry name" value="GTPASE ERA"/>
    <property type="match status" value="1"/>
</dbReference>
<dbReference type="PANTHER" id="PTHR42698:SF1">
    <property type="entry name" value="GTPASE ERA, MITOCHONDRIAL"/>
    <property type="match status" value="1"/>
</dbReference>
<dbReference type="Pfam" id="PF07650">
    <property type="entry name" value="KH_2"/>
    <property type="match status" value="1"/>
</dbReference>
<dbReference type="Pfam" id="PF01926">
    <property type="entry name" value="MMR_HSR1"/>
    <property type="match status" value="1"/>
</dbReference>
<dbReference type="PRINTS" id="PR00326">
    <property type="entry name" value="GTP1OBG"/>
</dbReference>
<dbReference type="SUPFAM" id="SSF52540">
    <property type="entry name" value="P-loop containing nucleoside triphosphate hydrolases"/>
    <property type="match status" value="1"/>
</dbReference>
<dbReference type="SUPFAM" id="SSF54814">
    <property type="entry name" value="Prokaryotic type KH domain (KH-domain type II)"/>
    <property type="match status" value="1"/>
</dbReference>
<dbReference type="PROSITE" id="PS51713">
    <property type="entry name" value="G_ERA"/>
    <property type="match status" value="1"/>
</dbReference>
<dbReference type="PROSITE" id="PS50823">
    <property type="entry name" value="KH_TYPE_2"/>
    <property type="match status" value="1"/>
</dbReference>
<protein>
    <recommendedName>
        <fullName evidence="1">GTPase Era</fullName>
    </recommendedName>
</protein>
<proteinExistence type="inferred from homology"/>
<keyword id="KW-1003">Cell membrane</keyword>
<keyword id="KW-0963">Cytoplasm</keyword>
<keyword id="KW-0342">GTP-binding</keyword>
<keyword id="KW-0472">Membrane</keyword>
<keyword id="KW-0547">Nucleotide-binding</keyword>
<keyword id="KW-1185">Reference proteome</keyword>
<keyword id="KW-0690">Ribosome biogenesis</keyword>
<keyword id="KW-0694">RNA-binding</keyword>
<keyword id="KW-0699">rRNA-binding</keyword>
<evidence type="ECO:0000255" key="1">
    <source>
        <dbReference type="HAMAP-Rule" id="MF_00367"/>
    </source>
</evidence>
<evidence type="ECO:0000255" key="2">
    <source>
        <dbReference type="PROSITE-ProRule" id="PRU01050"/>
    </source>
</evidence>
<reference key="1">
    <citation type="submission" date="2003-10" db="EMBL/GenBank/DDBJ databases">
        <title>The complete genome sequence of the alkaliphilic Bacillus clausii KSM-K16.</title>
        <authorList>
            <person name="Takaki Y."/>
            <person name="Kageyama Y."/>
            <person name="Shimamura S."/>
            <person name="Suzuki H."/>
            <person name="Nishi S."/>
            <person name="Hatada Y."/>
            <person name="Kawai S."/>
            <person name="Ito S."/>
            <person name="Horikoshi K."/>
        </authorList>
    </citation>
    <scope>NUCLEOTIDE SEQUENCE [LARGE SCALE GENOMIC DNA]</scope>
    <source>
        <strain>KSM-K16</strain>
    </source>
</reference>
<organism>
    <name type="scientific">Shouchella clausii (strain KSM-K16)</name>
    <name type="common">Alkalihalobacillus clausii</name>
    <dbReference type="NCBI Taxonomy" id="66692"/>
    <lineage>
        <taxon>Bacteria</taxon>
        <taxon>Bacillati</taxon>
        <taxon>Bacillota</taxon>
        <taxon>Bacilli</taxon>
        <taxon>Bacillales</taxon>
        <taxon>Bacillaceae</taxon>
        <taxon>Shouchella</taxon>
    </lineage>
</organism>
<accession>Q5WHD9</accession>